<gene>
    <name type="primary">mak5</name>
    <name type="ORF">AN1750</name>
</gene>
<keyword id="KW-0067">ATP-binding</keyword>
<keyword id="KW-0347">Helicase</keyword>
<keyword id="KW-0378">Hydrolase</keyword>
<keyword id="KW-0547">Nucleotide-binding</keyword>
<keyword id="KW-0539">Nucleus</keyword>
<keyword id="KW-1185">Reference proteome</keyword>
<keyword id="KW-0690">Ribosome biogenesis</keyword>
<keyword id="KW-0694">RNA-binding</keyword>
<keyword id="KW-0698">rRNA processing</keyword>
<feature type="chain" id="PRO_0000232235" description="ATP-dependent RNA helicase mak5">
    <location>
        <begin position="1"/>
        <end position="770"/>
    </location>
</feature>
<feature type="domain" description="Helicase ATP-binding" evidence="2">
    <location>
        <begin position="228"/>
        <end position="437"/>
    </location>
</feature>
<feature type="domain" description="Helicase C-terminal" evidence="3">
    <location>
        <begin position="489"/>
        <end position="639"/>
    </location>
</feature>
<feature type="region of interest" description="Disordered" evidence="4">
    <location>
        <begin position="1"/>
        <end position="33"/>
    </location>
</feature>
<feature type="region of interest" description="Disordered" evidence="4">
    <location>
        <begin position="78"/>
        <end position="174"/>
    </location>
</feature>
<feature type="region of interest" description="Disordered" evidence="4">
    <location>
        <begin position="384"/>
        <end position="404"/>
    </location>
</feature>
<feature type="region of interest" description="Disordered" evidence="4">
    <location>
        <begin position="693"/>
        <end position="713"/>
    </location>
</feature>
<feature type="short sequence motif" description="Q motif">
    <location>
        <begin position="197"/>
        <end position="225"/>
    </location>
</feature>
<feature type="short sequence motif" description="DEAD box">
    <location>
        <begin position="363"/>
        <end position="366"/>
    </location>
</feature>
<feature type="compositionally biased region" description="Basic and acidic residues" evidence="4">
    <location>
        <begin position="1"/>
        <end position="10"/>
    </location>
</feature>
<feature type="compositionally biased region" description="Acidic residues" evidence="4">
    <location>
        <begin position="105"/>
        <end position="118"/>
    </location>
</feature>
<feature type="compositionally biased region" description="Basic and acidic residues" evidence="4">
    <location>
        <begin position="138"/>
        <end position="154"/>
    </location>
</feature>
<feature type="compositionally biased region" description="Basic and acidic residues" evidence="4">
    <location>
        <begin position="162"/>
        <end position="174"/>
    </location>
</feature>
<feature type="compositionally biased region" description="Acidic residues" evidence="4">
    <location>
        <begin position="391"/>
        <end position="401"/>
    </location>
</feature>
<feature type="binding site" evidence="2">
    <location>
        <begin position="241"/>
        <end position="248"/>
    </location>
    <ligand>
        <name>ATP</name>
        <dbReference type="ChEBI" id="CHEBI:30616"/>
    </ligand>
</feature>
<evidence type="ECO:0000250" key="1"/>
<evidence type="ECO:0000255" key="2">
    <source>
        <dbReference type="PROSITE-ProRule" id="PRU00541"/>
    </source>
</evidence>
<evidence type="ECO:0000255" key="3">
    <source>
        <dbReference type="PROSITE-ProRule" id="PRU00542"/>
    </source>
</evidence>
<evidence type="ECO:0000256" key="4">
    <source>
        <dbReference type="SAM" id="MobiDB-lite"/>
    </source>
</evidence>
<evidence type="ECO:0000305" key="5"/>
<organism>
    <name type="scientific">Emericella nidulans (strain FGSC A4 / ATCC 38163 / CBS 112.46 / NRRL 194 / M139)</name>
    <name type="common">Aspergillus nidulans</name>
    <dbReference type="NCBI Taxonomy" id="227321"/>
    <lineage>
        <taxon>Eukaryota</taxon>
        <taxon>Fungi</taxon>
        <taxon>Dikarya</taxon>
        <taxon>Ascomycota</taxon>
        <taxon>Pezizomycotina</taxon>
        <taxon>Eurotiomycetes</taxon>
        <taxon>Eurotiomycetidae</taxon>
        <taxon>Eurotiales</taxon>
        <taxon>Aspergillaceae</taxon>
        <taxon>Aspergillus</taxon>
        <taxon>Aspergillus subgen. Nidulantes</taxon>
    </lineage>
</organism>
<dbReference type="EC" id="3.6.4.13"/>
<dbReference type="EMBL" id="AACD01000027">
    <property type="protein sequence ID" value="EAA64036.1"/>
    <property type="molecule type" value="Genomic_DNA"/>
</dbReference>
<dbReference type="EMBL" id="BN001307">
    <property type="protein sequence ID" value="CBF85492.1"/>
    <property type="molecule type" value="Genomic_DNA"/>
</dbReference>
<dbReference type="RefSeq" id="XP_659354.1">
    <property type="nucleotide sequence ID" value="XM_654262.1"/>
</dbReference>
<dbReference type="SMR" id="Q5BCI0"/>
<dbReference type="FunCoup" id="Q5BCI0">
    <property type="interactions" value="910"/>
</dbReference>
<dbReference type="STRING" id="227321.Q5BCI0"/>
<dbReference type="EnsemblFungi" id="CBF85492">
    <property type="protein sequence ID" value="CBF85492"/>
    <property type="gene ID" value="ANIA_01750"/>
</dbReference>
<dbReference type="KEGG" id="ani:ANIA_01750"/>
<dbReference type="VEuPathDB" id="FungiDB:AN1750"/>
<dbReference type="eggNOG" id="KOG0347">
    <property type="taxonomic scope" value="Eukaryota"/>
</dbReference>
<dbReference type="HOGENOM" id="CLU_003041_13_0_1"/>
<dbReference type="InParanoid" id="Q5BCI0"/>
<dbReference type="OMA" id="QMIQKAR"/>
<dbReference type="OrthoDB" id="4310724at2759"/>
<dbReference type="Proteomes" id="UP000000560">
    <property type="component" value="Chromosome VII"/>
</dbReference>
<dbReference type="GO" id="GO:0005730">
    <property type="term" value="C:nucleolus"/>
    <property type="evidence" value="ECO:0000318"/>
    <property type="project" value="GO_Central"/>
</dbReference>
<dbReference type="GO" id="GO:0005524">
    <property type="term" value="F:ATP binding"/>
    <property type="evidence" value="ECO:0007669"/>
    <property type="project" value="UniProtKB-KW"/>
</dbReference>
<dbReference type="GO" id="GO:0016887">
    <property type="term" value="F:ATP hydrolysis activity"/>
    <property type="evidence" value="ECO:0007669"/>
    <property type="project" value="RHEA"/>
</dbReference>
<dbReference type="GO" id="GO:0003723">
    <property type="term" value="F:RNA binding"/>
    <property type="evidence" value="ECO:0007669"/>
    <property type="project" value="UniProtKB-KW"/>
</dbReference>
<dbReference type="GO" id="GO:0003724">
    <property type="term" value="F:RNA helicase activity"/>
    <property type="evidence" value="ECO:0007669"/>
    <property type="project" value="UniProtKB-EC"/>
</dbReference>
<dbReference type="GO" id="GO:0006364">
    <property type="term" value="P:rRNA processing"/>
    <property type="evidence" value="ECO:0007669"/>
    <property type="project" value="UniProtKB-KW"/>
</dbReference>
<dbReference type="CDD" id="cd18787">
    <property type="entry name" value="SF2_C_DEAD"/>
    <property type="match status" value="1"/>
</dbReference>
<dbReference type="Gene3D" id="3.40.50.300">
    <property type="entry name" value="P-loop containing nucleotide triphosphate hydrolases"/>
    <property type="match status" value="2"/>
</dbReference>
<dbReference type="InterPro" id="IPR011545">
    <property type="entry name" value="DEAD/DEAH_box_helicase_dom"/>
</dbReference>
<dbReference type="InterPro" id="IPR014001">
    <property type="entry name" value="Helicase_ATP-bd"/>
</dbReference>
<dbReference type="InterPro" id="IPR001650">
    <property type="entry name" value="Helicase_C-like"/>
</dbReference>
<dbReference type="InterPro" id="IPR027417">
    <property type="entry name" value="P-loop_NTPase"/>
</dbReference>
<dbReference type="InterPro" id="IPR000629">
    <property type="entry name" value="RNA-helicase_DEAD-box_CS"/>
</dbReference>
<dbReference type="InterPro" id="IPR014014">
    <property type="entry name" value="RNA_helicase_DEAD_Q_motif"/>
</dbReference>
<dbReference type="PANTHER" id="PTHR24031">
    <property type="entry name" value="RNA HELICASE"/>
    <property type="match status" value="1"/>
</dbReference>
<dbReference type="Pfam" id="PF00270">
    <property type="entry name" value="DEAD"/>
    <property type="match status" value="1"/>
</dbReference>
<dbReference type="Pfam" id="PF00271">
    <property type="entry name" value="Helicase_C"/>
    <property type="match status" value="1"/>
</dbReference>
<dbReference type="SMART" id="SM00487">
    <property type="entry name" value="DEXDc"/>
    <property type="match status" value="1"/>
</dbReference>
<dbReference type="SMART" id="SM00490">
    <property type="entry name" value="HELICc"/>
    <property type="match status" value="1"/>
</dbReference>
<dbReference type="SUPFAM" id="SSF52540">
    <property type="entry name" value="P-loop containing nucleoside triphosphate hydrolases"/>
    <property type="match status" value="2"/>
</dbReference>
<dbReference type="PROSITE" id="PS00039">
    <property type="entry name" value="DEAD_ATP_HELICASE"/>
    <property type="match status" value="1"/>
</dbReference>
<dbReference type="PROSITE" id="PS51192">
    <property type="entry name" value="HELICASE_ATP_BIND_1"/>
    <property type="match status" value="1"/>
</dbReference>
<dbReference type="PROSITE" id="PS51194">
    <property type="entry name" value="HELICASE_CTER"/>
    <property type="match status" value="1"/>
</dbReference>
<dbReference type="PROSITE" id="PS51195">
    <property type="entry name" value="Q_MOTIF"/>
    <property type="match status" value="1"/>
</dbReference>
<reference key="1">
    <citation type="journal article" date="2005" name="Nature">
        <title>Sequencing of Aspergillus nidulans and comparative analysis with A. fumigatus and A. oryzae.</title>
        <authorList>
            <person name="Galagan J.E."/>
            <person name="Calvo S.E."/>
            <person name="Cuomo C."/>
            <person name="Ma L.-J."/>
            <person name="Wortman J.R."/>
            <person name="Batzoglou S."/>
            <person name="Lee S.-I."/>
            <person name="Bastuerkmen M."/>
            <person name="Spevak C.C."/>
            <person name="Clutterbuck J."/>
            <person name="Kapitonov V."/>
            <person name="Jurka J."/>
            <person name="Scazzocchio C."/>
            <person name="Farman M.L."/>
            <person name="Butler J."/>
            <person name="Purcell S."/>
            <person name="Harris S."/>
            <person name="Braus G.H."/>
            <person name="Draht O."/>
            <person name="Busch S."/>
            <person name="D'Enfert C."/>
            <person name="Bouchier C."/>
            <person name="Goldman G.H."/>
            <person name="Bell-Pedersen D."/>
            <person name="Griffiths-Jones S."/>
            <person name="Doonan J.H."/>
            <person name="Yu J."/>
            <person name="Vienken K."/>
            <person name="Pain A."/>
            <person name="Freitag M."/>
            <person name="Selker E.U."/>
            <person name="Archer D.B."/>
            <person name="Penalva M.A."/>
            <person name="Oakley B.R."/>
            <person name="Momany M."/>
            <person name="Tanaka T."/>
            <person name="Kumagai T."/>
            <person name="Asai K."/>
            <person name="Machida M."/>
            <person name="Nierman W.C."/>
            <person name="Denning D.W."/>
            <person name="Caddick M.X."/>
            <person name="Hynes M."/>
            <person name="Paoletti M."/>
            <person name="Fischer R."/>
            <person name="Miller B.L."/>
            <person name="Dyer P.S."/>
            <person name="Sachs M.S."/>
            <person name="Osmani S.A."/>
            <person name="Birren B.W."/>
        </authorList>
    </citation>
    <scope>NUCLEOTIDE SEQUENCE [LARGE SCALE GENOMIC DNA]</scope>
    <source>
        <strain>FGSC A4 / ATCC 38163 / CBS 112.46 / NRRL 194 / M139</strain>
    </source>
</reference>
<reference key="2">
    <citation type="journal article" date="2009" name="Fungal Genet. Biol.">
        <title>The 2008 update of the Aspergillus nidulans genome annotation: a community effort.</title>
        <authorList>
            <person name="Wortman J.R."/>
            <person name="Gilsenan J.M."/>
            <person name="Joardar V."/>
            <person name="Deegan J."/>
            <person name="Clutterbuck J."/>
            <person name="Andersen M.R."/>
            <person name="Archer D."/>
            <person name="Bencina M."/>
            <person name="Braus G."/>
            <person name="Coutinho P."/>
            <person name="von Dohren H."/>
            <person name="Doonan J."/>
            <person name="Driessen A.J."/>
            <person name="Durek P."/>
            <person name="Espeso E."/>
            <person name="Fekete E."/>
            <person name="Flipphi M."/>
            <person name="Estrada C.G."/>
            <person name="Geysens S."/>
            <person name="Goldman G."/>
            <person name="de Groot P.W."/>
            <person name="Hansen K."/>
            <person name="Harris S.D."/>
            <person name="Heinekamp T."/>
            <person name="Helmstaedt K."/>
            <person name="Henrissat B."/>
            <person name="Hofmann G."/>
            <person name="Homan T."/>
            <person name="Horio T."/>
            <person name="Horiuchi H."/>
            <person name="James S."/>
            <person name="Jones M."/>
            <person name="Karaffa L."/>
            <person name="Karanyi Z."/>
            <person name="Kato M."/>
            <person name="Keller N."/>
            <person name="Kelly D.E."/>
            <person name="Kiel J.A."/>
            <person name="Kim J.M."/>
            <person name="van der Klei I.J."/>
            <person name="Klis F.M."/>
            <person name="Kovalchuk A."/>
            <person name="Krasevec N."/>
            <person name="Kubicek C.P."/>
            <person name="Liu B."/>
            <person name="Maccabe A."/>
            <person name="Meyer V."/>
            <person name="Mirabito P."/>
            <person name="Miskei M."/>
            <person name="Mos M."/>
            <person name="Mullins J."/>
            <person name="Nelson D.R."/>
            <person name="Nielsen J."/>
            <person name="Oakley B.R."/>
            <person name="Osmani S.A."/>
            <person name="Pakula T."/>
            <person name="Paszewski A."/>
            <person name="Paulsen I."/>
            <person name="Pilsyk S."/>
            <person name="Pocsi I."/>
            <person name="Punt P.J."/>
            <person name="Ram A.F."/>
            <person name="Ren Q."/>
            <person name="Robellet X."/>
            <person name="Robson G."/>
            <person name="Seiboth B."/>
            <person name="van Solingen P."/>
            <person name="Specht T."/>
            <person name="Sun J."/>
            <person name="Taheri-Talesh N."/>
            <person name="Takeshita N."/>
            <person name="Ussery D."/>
            <person name="vanKuyk P.A."/>
            <person name="Visser H."/>
            <person name="van de Vondervoort P.J."/>
            <person name="de Vries R.P."/>
            <person name="Walton J."/>
            <person name="Xiang X."/>
            <person name="Xiong Y."/>
            <person name="Zeng A.P."/>
            <person name="Brandt B.W."/>
            <person name="Cornell M.J."/>
            <person name="van den Hondel C.A."/>
            <person name="Visser J."/>
            <person name="Oliver S.G."/>
            <person name="Turner G."/>
        </authorList>
    </citation>
    <scope>GENOME REANNOTATION</scope>
    <source>
        <strain>FGSC A4 / ATCC 38163 / CBS 112.46 / NRRL 194 / M139</strain>
    </source>
</reference>
<sequence>MGQKRQRDQKGPTLHVRKRKRTGKPTNVAERESKPEVVVGVDDLNWKEVALPDRLDNFEGFFGLEEIEGVDIVRPQGNGQLRFKSAPGKPGKSILKKPTPKSEETEFDDEWNGFSDEDLEKKEGASTVNEVAKAADVNGKKGKDAKNKKDIKAKEPKKKLKEQKEKDGAQAKDRSITSGLSFAALEDEADDDGADISAWEPLGLSPETLTSLSKLKFSTPTSVQKSCIPPILDGHDVIGKASTGSGKTLAFGLPILEHYLERERRKTIDSEEEKEKIPIALILSPTRELAHQLQKHIYGLISNAPGVNARTALLTGGLSVQKQQRLLETADIVIGTPGRVWEVLRTGQGLIRRMQGIKFLVIDEADRLLSEGHFKEVEDILSSLDRVEDGGPPDEEDDSSEENVVPGVERQTLVFSATFHRDLQQKLAGKGKWTGGDIMNKKESMEYLLQKLNFREEKPKFIDVNPVSQMAEGLKEGIVECPAMEKDLYLYTLLLYHPKHRTLVFTNSISAVRRITQLLQTLQLPALALHSSMAQKARLRSVERFSSSTANPGTILVATDVAARGLDIKGIDFVIHYHAPRTADTYVHRSGRTARAGASGKSVIICSPEEMVGVVRLAAKVHANMANGKKLPLESLELDRRIVSRVRQRVVLAARITDSNIAKEKITTEDNWLRNAAEDLGVEYDSDEFDQAKGWGRGRGRGRQERDRQVGSTSKAELAGLRAELKELLSQRVNLGVSERYLTSGRVDIEALLREEGNNSFLGQVDPLGF</sequence>
<name>MAK5_EMENI</name>
<comment type="function">
    <text evidence="1">ATP-binding RNA helicase involved in the biogenesis of 60S ribosomal subunits and is required for the normal formation of 25S and 5.8S rRNAs.</text>
</comment>
<comment type="catalytic activity">
    <reaction>
        <text>ATP + H2O = ADP + phosphate + H(+)</text>
        <dbReference type="Rhea" id="RHEA:13065"/>
        <dbReference type="ChEBI" id="CHEBI:15377"/>
        <dbReference type="ChEBI" id="CHEBI:15378"/>
        <dbReference type="ChEBI" id="CHEBI:30616"/>
        <dbReference type="ChEBI" id="CHEBI:43474"/>
        <dbReference type="ChEBI" id="CHEBI:456216"/>
        <dbReference type="EC" id="3.6.4.13"/>
    </reaction>
</comment>
<comment type="subcellular location">
    <subcellularLocation>
        <location evidence="1">Nucleus</location>
        <location evidence="1">Nucleolus</location>
    </subcellularLocation>
</comment>
<comment type="domain">
    <text>The Q motif is unique to and characteristic of the DEAD box family of RNA helicases and controls ATP binding and hydrolysis.</text>
</comment>
<comment type="similarity">
    <text evidence="5">Belongs to the DEAD box helicase family. DDX24/MAK5 subfamily.</text>
</comment>
<accession>Q5BCI0</accession>
<accession>C8VP52</accession>
<proteinExistence type="inferred from homology"/>
<protein>
    <recommendedName>
        <fullName>ATP-dependent RNA helicase mak5</fullName>
        <ecNumber>3.6.4.13</ecNumber>
    </recommendedName>
</protein>